<protein>
    <recommendedName>
        <fullName evidence="1">Small ribosomal subunit protein bS18</fullName>
    </recommendedName>
    <alternativeName>
        <fullName evidence="2">30S ribosomal protein S18</fullName>
    </alternativeName>
</protein>
<reference key="1">
    <citation type="journal article" date="2006" name="Proc. Natl. Acad. Sci. U.S.A.">
        <title>Comparative genomics of the lactic acid bacteria.</title>
        <authorList>
            <person name="Makarova K.S."/>
            <person name="Slesarev A."/>
            <person name="Wolf Y.I."/>
            <person name="Sorokin A."/>
            <person name="Mirkin B."/>
            <person name="Koonin E.V."/>
            <person name="Pavlov A."/>
            <person name="Pavlova N."/>
            <person name="Karamychev V."/>
            <person name="Polouchine N."/>
            <person name="Shakhova V."/>
            <person name="Grigoriev I."/>
            <person name="Lou Y."/>
            <person name="Rohksar D."/>
            <person name="Lucas S."/>
            <person name="Huang K."/>
            <person name="Goodstein D.M."/>
            <person name="Hawkins T."/>
            <person name="Plengvidhya V."/>
            <person name="Welker D."/>
            <person name="Hughes J."/>
            <person name="Goh Y."/>
            <person name="Benson A."/>
            <person name="Baldwin K."/>
            <person name="Lee J.-H."/>
            <person name="Diaz-Muniz I."/>
            <person name="Dosti B."/>
            <person name="Smeianov V."/>
            <person name="Wechter W."/>
            <person name="Barabote R."/>
            <person name="Lorca G."/>
            <person name="Altermann E."/>
            <person name="Barrangou R."/>
            <person name="Ganesan B."/>
            <person name="Xie Y."/>
            <person name="Rawsthorne H."/>
            <person name="Tamir D."/>
            <person name="Parker C."/>
            <person name="Breidt F."/>
            <person name="Broadbent J.R."/>
            <person name="Hutkins R."/>
            <person name="O'Sullivan D."/>
            <person name="Steele J."/>
            <person name="Unlu G."/>
            <person name="Saier M.H. Jr."/>
            <person name="Klaenhammer T."/>
            <person name="Richardson P."/>
            <person name="Kozyavkin S."/>
            <person name="Weimer B.C."/>
            <person name="Mills D.A."/>
        </authorList>
    </citation>
    <scope>NUCLEOTIDE SEQUENCE [LARGE SCALE GENOMIC DNA]</scope>
    <source>
        <strain>ATCC BAA-491 / LMD-9</strain>
    </source>
</reference>
<dbReference type="EMBL" id="CP000419">
    <property type="protein sequence ID" value="ABJ66867.1"/>
    <property type="molecule type" value="Genomic_DNA"/>
</dbReference>
<dbReference type="RefSeq" id="WP_002945024.1">
    <property type="nucleotide sequence ID" value="NZ_CP086001.1"/>
</dbReference>
<dbReference type="SMR" id="Q03IV5"/>
<dbReference type="GeneID" id="66899488"/>
<dbReference type="KEGG" id="ste:STER_1726"/>
<dbReference type="HOGENOM" id="CLU_148710_2_2_9"/>
<dbReference type="GO" id="GO:0022627">
    <property type="term" value="C:cytosolic small ribosomal subunit"/>
    <property type="evidence" value="ECO:0007669"/>
    <property type="project" value="TreeGrafter"/>
</dbReference>
<dbReference type="GO" id="GO:0070181">
    <property type="term" value="F:small ribosomal subunit rRNA binding"/>
    <property type="evidence" value="ECO:0007669"/>
    <property type="project" value="TreeGrafter"/>
</dbReference>
<dbReference type="GO" id="GO:0003735">
    <property type="term" value="F:structural constituent of ribosome"/>
    <property type="evidence" value="ECO:0007669"/>
    <property type="project" value="InterPro"/>
</dbReference>
<dbReference type="GO" id="GO:0006412">
    <property type="term" value="P:translation"/>
    <property type="evidence" value="ECO:0007669"/>
    <property type="project" value="UniProtKB-UniRule"/>
</dbReference>
<dbReference type="FunFam" id="4.10.640.10:FF:000003">
    <property type="entry name" value="30S ribosomal protein S18"/>
    <property type="match status" value="1"/>
</dbReference>
<dbReference type="Gene3D" id="4.10.640.10">
    <property type="entry name" value="Ribosomal protein S18"/>
    <property type="match status" value="1"/>
</dbReference>
<dbReference type="HAMAP" id="MF_00270">
    <property type="entry name" value="Ribosomal_bS18"/>
    <property type="match status" value="1"/>
</dbReference>
<dbReference type="InterPro" id="IPR001648">
    <property type="entry name" value="Ribosomal_bS18"/>
</dbReference>
<dbReference type="InterPro" id="IPR018275">
    <property type="entry name" value="Ribosomal_bS18_CS"/>
</dbReference>
<dbReference type="InterPro" id="IPR036870">
    <property type="entry name" value="Ribosomal_bS18_sf"/>
</dbReference>
<dbReference type="NCBIfam" id="TIGR00165">
    <property type="entry name" value="S18"/>
    <property type="match status" value="1"/>
</dbReference>
<dbReference type="PANTHER" id="PTHR13479">
    <property type="entry name" value="30S RIBOSOMAL PROTEIN S18"/>
    <property type="match status" value="1"/>
</dbReference>
<dbReference type="PANTHER" id="PTHR13479:SF40">
    <property type="entry name" value="SMALL RIBOSOMAL SUBUNIT PROTEIN BS18M"/>
    <property type="match status" value="1"/>
</dbReference>
<dbReference type="Pfam" id="PF01084">
    <property type="entry name" value="Ribosomal_S18"/>
    <property type="match status" value="1"/>
</dbReference>
<dbReference type="PRINTS" id="PR00974">
    <property type="entry name" value="RIBOSOMALS18"/>
</dbReference>
<dbReference type="SUPFAM" id="SSF46911">
    <property type="entry name" value="Ribosomal protein S18"/>
    <property type="match status" value="1"/>
</dbReference>
<dbReference type="PROSITE" id="PS00057">
    <property type="entry name" value="RIBOSOMAL_S18"/>
    <property type="match status" value="1"/>
</dbReference>
<feature type="chain" id="PRO_1000003637" description="Small ribosomal subunit protein bS18">
    <location>
        <begin position="1"/>
        <end position="79"/>
    </location>
</feature>
<keyword id="KW-0687">Ribonucleoprotein</keyword>
<keyword id="KW-0689">Ribosomal protein</keyword>
<keyword id="KW-0694">RNA-binding</keyword>
<keyword id="KW-0699">rRNA-binding</keyword>
<name>RS18_STRTD</name>
<accession>Q03IV5</accession>
<proteinExistence type="inferred from homology"/>
<gene>
    <name evidence="1" type="primary">rpsR</name>
    <name type="ordered locus">STER_1726</name>
</gene>
<sequence length="79" mass="9268">MAQQRRGGFKRRKKFDYIAANKIEYVDYKDTELLSRFVSERGKILPRRVTGTSAKNQRKVTTAIKRARVMALMPYVNED</sequence>
<organism>
    <name type="scientific">Streptococcus thermophilus (strain ATCC BAA-491 / LMD-9)</name>
    <dbReference type="NCBI Taxonomy" id="322159"/>
    <lineage>
        <taxon>Bacteria</taxon>
        <taxon>Bacillati</taxon>
        <taxon>Bacillota</taxon>
        <taxon>Bacilli</taxon>
        <taxon>Lactobacillales</taxon>
        <taxon>Streptococcaceae</taxon>
        <taxon>Streptococcus</taxon>
    </lineage>
</organism>
<evidence type="ECO:0000255" key="1">
    <source>
        <dbReference type="HAMAP-Rule" id="MF_00270"/>
    </source>
</evidence>
<evidence type="ECO:0000305" key="2"/>
<comment type="function">
    <text evidence="1">Binds as a heterodimer with protein bS6 to the central domain of the 16S rRNA, where it helps stabilize the platform of the 30S subunit.</text>
</comment>
<comment type="subunit">
    <text evidence="1">Part of the 30S ribosomal subunit. Forms a tight heterodimer with protein bS6.</text>
</comment>
<comment type="similarity">
    <text evidence="1">Belongs to the bacterial ribosomal protein bS18 family.</text>
</comment>